<keyword id="KW-1035">Host cytoplasm</keyword>
<keyword id="KW-1185">Reference proteome</keyword>
<keyword id="KW-1242">Viral contractile tail ejection system</keyword>
<keyword id="KW-1171">Viral genome ejection through host cell envelope</keyword>
<keyword id="KW-1162">Viral penetration into host cytoplasm</keyword>
<keyword id="KW-1227">Viral tail protein</keyword>
<keyword id="KW-1229">Viral tail sheath protein</keyword>
<keyword id="KW-0946">Virion</keyword>
<keyword id="KW-1160">Virus entry into host cell</keyword>
<feature type="chain" id="PRO_0000432773" description="Tail sheath protein">
    <location>
        <begin position="1"/>
        <end position="571"/>
    </location>
</feature>
<organismHost>
    <name type="scientific">Bacillus subtilis</name>
    <dbReference type="NCBI Taxonomy" id="1423"/>
</organismHost>
<name>TSP_BPSP1</name>
<reference key="1">
    <citation type="journal article" date="2009" name="J. Mol. Biol.">
        <title>The genome of Bacillus subtilis bacteriophage SPO1.</title>
        <authorList>
            <person name="Stewart C.R."/>
            <person name="Casjens S.R."/>
            <person name="Cresawn S.G."/>
            <person name="Houtz J.M."/>
            <person name="Smith A.L."/>
            <person name="Ford M.E."/>
            <person name="Peebles C.L."/>
            <person name="Hatfull G.F."/>
            <person name="Hendrix R.W."/>
            <person name="Huang W.M."/>
            <person name="Pedulla M.L."/>
        </authorList>
    </citation>
    <scope>NUCLEOTIDE SEQUENCE [LARGE SCALE GENOMIC DNA]</scope>
</reference>
<organism evidence="4">
    <name type="scientific">Bacillus phage SP01</name>
    <name type="common">Bacteriophage SP01</name>
    <dbReference type="NCBI Taxonomy" id="2884427"/>
    <lineage>
        <taxon>Viruses</taxon>
        <taxon>Duplodnaviria</taxon>
        <taxon>Heunggongvirae</taxon>
        <taxon>Uroviricota</taxon>
        <taxon>Caudoviricetes</taxon>
        <taxon>Herelleviridae</taxon>
        <taxon>Spounavirinae</taxon>
        <taxon>Okubovirus</taxon>
        <taxon>Okubovirus SPO1</taxon>
    </lineage>
</organism>
<dbReference type="EMBL" id="FJ230960">
    <property type="protein sequence ID" value="ACI90985.1"/>
    <property type="molecule type" value="Genomic_DNA"/>
</dbReference>
<dbReference type="RefSeq" id="YP_002300356.1">
    <property type="nucleotide sequence ID" value="NC_011421.1"/>
</dbReference>
<dbReference type="SMR" id="B6V2P4"/>
<dbReference type="GeneID" id="7009074"/>
<dbReference type="KEGG" id="vg:7009074"/>
<dbReference type="Proteomes" id="UP000001590">
    <property type="component" value="Genome"/>
</dbReference>
<dbReference type="GO" id="GO:0030430">
    <property type="term" value="C:host cell cytoplasm"/>
    <property type="evidence" value="ECO:0007669"/>
    <property type="project" value="UniProtKB-SubCell"/>
</dbReference>
<dbReference type="GO" id="GO:0098015">
    <property type="term" value="C:virus tail"/>
    <property type="evidence" value="ECO:0000314"/>
    <property type="project" value="CACAO"/>
</dbReference>
<dbReference type="GO" id="GO:0098027">
    <property type="term" value="C:virus tail, sheath"/>
    <property type="evidence" value="ECO:0007669"/>
    <property type="project" value="UniProtKB-KW"/>
</dbReference>
<dbReference type="GO" id="GO:0099000">
    <property type="term" value="P:symbiont genome ejection through host cell envelope, contractile tail mechanism"/>
    <property type="evidence" value="ECO:0007669"/>
    <property type="project" value="UniProtKB-KW"/>
</dbReference>
<dbReference type="InterPro" id="IPR035089">
    <property type="entry name" value="Phage_sheath_subtilisin"/>
</dbReference>
<dbReference type="InterPro" id="IPR020287">
    <property type="entry name" value="Tail_sheath_C"/>
</dbReference>
<dbReference type="Pfam" id="PF04984">
    <property type="entry name" value="Phage_sheath_1"/>
    <property type="match status" value="1"/>
</dbReference>
<dbReference type="Pfam" id="PF17482">
    <property type="entry name" value="Phage_sheath_1C"/>
    <property type="match status" value="1"/>
</dbReference>
<gene>
    <name evidence="3" type="primary">9.1</name>
    <name evidence="3" type="ORF">SPO1_84</name>
</gene>
<comment type="function">
    <text evidence="1">Polymerizes as an extended structure around the baseplate-tail tube complex. During ejection, the sheath shifts to a contracted form, thereby making the inner tail tube protrude through the host cell envelope.</text>
</comment>
<comment type="subunit">
    <text evidence="1">Homomultimer.</text>
</comment>
<comment type="subcellular location">
    <subcellularLocation>
        <location evidence="1">Virion</location>
    </subcellularLocation>
    <subcellularLocation>
        <location evidence="1">Host cytoplasm</location>
    </subcellularLocation>
    <text evidence="1">Tail.</text>
</comment>
<comment type="similarity">
    <text evidence="2">Belongs to the myoviridae tail sheath protein family.</text>
</comment>
<evidence type="ECO:0000250" key="1">
    <source>
        <dbReference type="UniProtKB" id="P79678"/>
    </source>
</evidence>
<evidence type="ECO:0000305" key="2"/>
<evidence type="ECO:0000312" key="3">
    <source>
        <dbReference type="EMBL" id="ACI90985.1"/>
    </source>
</evidence>
<evidence type="ECO:0000312" key="4">
    <source>
        <dbReference type="Proteomes" id="UP000001590"/>
    </source>
</evidence>
<protein>
    <recommendedName>
        <fullName>Tail sheath protein</fullName>
        <shortName>TSP</shortName>
    </recommendedName>
</protein>
<sequence length="571" mass="61326">MAINQYGVNFNGRRIVHPGAYGSIDDSAMVVTSDGSSNIPIVIGTADSGKSGEVLWYTGVEDARNELGGGDLPQALEMMFSPSPEGGGGASLVGVIVANKTVPATATIGGVKFTAAEYGEGGNKIQVKLEDGSIPGSKKFTAYKWDTQDLDTFDNIGSVMSVAYTGTAKVAVIDVVVTDGVATKIETKVGEDAENLTVDLQLDLTNERYSTIEAVAQYLNSVSDYSASYVTSMSLELESSKLDAITGQDIKTKSYLTALKGDLEFRISQYADLVDVEVTGEIVNFDNTYLSGGEKGTTPASWSDYLDLIKKQYSDILVVLTDSEAIHAEALAHVQQMENRKQRQMLFVGGGKGEAPERAIERASLLNSSRAVLAYPGIYHSSYYSGSRELPAYFTAAMIAGRVAGVSQSTPVTFNKFNLVSLGRDMLAGDPEIDQLITSGVCTLEKVKNGAIRLVQGITTYIGSNNTLLREISVRRTADLVATSVEQTLEDTFVGKKGVSTTVSSVETVVSDTLAEKVRTEDIIGYGDIKVTFKNTMIYVDYEVAVVEPMNYILVRSHFVPDTGQFTTEEV</sequence>
<accession>B6V2P4</accession>
<proteinExistence type="inferred from homology"/>